<evidence type="ECO:0000255" key="1">
    <source>
        <dbReference type="HAMAP-Rule" id="MF_01718"/>
    </source>
</evidence>
<organism>
    <name type="scientific">Burkholderia ambifaria (strain ATCC BAA-244 / DSM 16087 / CCUG 44356 / LMG 19182 / AMMD)</name>
    <name type="common">Burkholderia cepacia (strain AMMD)</name>
    <dbReference type="NCBI Taxonomy" id="339670"/>
    <lineage>
        <taxon>Bacteria</taxon>
        <taxon>Pseudomonadati</taxon>
        <taxon>Pseudomonadota</taxon>
        <taxon>Betaproteobacteria</taxon>
        <taxon>Burkholderiales</taxon>
        <taxon>Burkholderiaceae</taxon>
        <taxon>Burkholderia</taxon>
        <taxon>Burkholderia cepacia complex</taxon>
    </lineage>
</organism>
<gene>
    <name evidence="1" type="primary">hmuV</name>
    <name type="ordered locus">Bamb_4776</name>
</gene>
<protein>
    <recommendedName>
        <fullName evidence="1">Hemin import ATP-binding protein HmuV</fullName>
        <ecNumber evidence="1">7.6.2.-</ecNumber>
    </recommendedName>
</protein>
<dbReference type="EC" id="7.6.2.-" evidence="1"/>
<dbReference type="EMBL" id="CP000441">
    <property type="protein sequence ID" value="ABI90326.1"/>
    <property type="molecule type" value="Genomic_DNA"/>
</dbReference>
<dbReference type="RefSeq" id="WP_011659727.1">
    <property type="nucleotide sequence ID" value="NC_008391.1"/>
</dbReference>
<dbReference type="SMR" id="Q0B697"/>
<dbReference type="GeneID" id="93087730"/>
<dbReference type="KEGG" id="bam:Bamb_4776"/>
<dbReference type="PATRIC" id="fig|339670.21.peg.5133"/>
<dbReference type="eggNOG" id="COG4559">
    <property type="taxonomic scope" value="Bacteria"/>
</dbReference>
<dbReference type="Proteomes" id="UP000000662">
    <property type="component" value="Chromosome 2"/>
</dbReference>
<dbReference type="GO" id="GO:0005886">
    <property type="term" value="C:plasma membrane"/>
    <property type="evidence" value="ECO:0007669"/>
    <property type="project" value="UniProtKB-SubCell"/>
</dbReference>
<dbReference type="GO" id="GO:0005524">
    <property type="term" value="F:ATP binding"/>
    <property type="evidence" value="ECO:0007669"/>
    <property type="project" value="UniProtKB-KW"/>
</dbReference>
<dbReference type="GO" id="GO:0016887">
    <property type="term" value="F:ATP hydrolysis activity"/>
    <property type="evidence" value="ECO:0007669"/>
    <property type="project" value="InterPro"/>
</dbReference>
<dbReference type="CDD" id="cd03214">
    <property type="entry name" value="ABC_Iron-Siderophores_B12_Hemin"/>
    <property type="match status" value="1"/>
</dbReference>
<dbReference type="Gene3D" id="3.40.50.300">
    <property type="entry name" value="P-loop containing nucleotide triphosphate hydrolases"/>
    <property type="match status" value="1"/>
</dbReference>
<dbReference type="InterPro" id="IPR003593">
    <property type="entry name" value="AAA+_ATPase"/>
</dbReference>
<dbReference type="InterPro" id="IPR003439">
    <property type="entry name" value="ABC_transporter-like_ATP-bd"/>
</dbReference>
<dbReference type="InterPro" id="IPR017871">
    <property type="entry name" value="ABC_transporter-like_CS"/>
</dbReference>
<dbReference type="InterPro" id="IPR027417">
    <property type="entry name" value="P-loop_NTPase"/>
</dbReference>
<dbReference type="NCBIfam" id="NF010067">
    <property type="entry name" value="PRK13547.1"/>
    <property type="match status" value="1"/>
</dbReference>
<dbReference type="NCBIfam" id="NF010068">
    <property type="entry name" value="PRK13548.1"/>
    <property type="match status" value="1"/>
</dbReference>
<dbReference type="PANTHER" id="PTHR42794">
    <property type="entry name" value="HEMIN IMPORT ATP-BINDING PROTEIN HMUV"/>
    <property type="match status" value="1"/>
</dbReference>
<dbReference type="PANTHER" id="PTHR42794:SF1">
    <property type="entry name" value="HEMIN IMPORT ATP-BINDING PROTEIN HMUV"/>
    <property type="match status" value="1"/>
</dbReference>
<dbReference type="Pfam" id="PF00005">
    <property type="entry name" value="ABC_tran"/>
    <property type="match status" value="1"/>
</dbReference>
<dbReference type="SMART" id="SM00382">
    <property type="entry name" value="AAA"/>
    <property type="match status" value="1"/>
</dbReference>
<dbReference type="SUPFAM" id="SSF52540">
    <property type="entry name" value="P-loop containing nucleoside triphosphate hydrolases"/>
    <property type="match status" value="1"/>
</dbReference>
<dbReference type="PROSITE" id="PS00211">
    <property type="entry name" value="ABC_TRANSPORTER_1"/>
    <property type="match status" value="1"/>
</dbReference>
<dbReference type="PROSITE" id="PS50893">
    <property type="entry name" value="ABC_TRANSPORTER_2"/>
    <property type="match status" value="1"/>
</dbReference>
<dbReference type="PROSITE" id="PS51261">
    <property type="entry name" value="HMUV"/>
    <property type="match status" value="1"/>
</dbReference>
<reference key="1">
    <citation type="submission" date="2006-08" db="EMBL/GenBank/DDBJ databases">
        <title>Complete sequence of chromosome 2 of Burkholderia cepacia AMMD.</title>
        <authorList>
            <person name="Copeland A."/>
            <person name="Lucas S."/>
            <person name="Lapidus A."/>
            <person name="Barry K."/>
            <person name="Detter J.C."/>
            <person name="Glavina del Rio T."/>
            <person name="Hammon N."/>
            <person name="Israni S."/>
            <person name="Pitluck S."/>
            <person name="Bruce D."/>
            <person name="Chain P."/>
            <person name="Malfatti S."/>
            <person name="Shin M."/>
            <person name="Vergez L."/>
            <person name="Schmutz J."/>
            <person name="Larimer F."/>
            <person name="Land M."/>
            <person name="Hauser L."/>
            <person name="Kyrpides N."/>
            <person name="Kim E."/>
            <person name="Parke J."/>
            <person name="Coenye T."/>
            <person name="Konstantinidis K."/>
            <person name="Ramette A."/>
            <person name="Tiedje J."/>
            <person name="Richardson P."/>
        </authorList>
    </citation>
    <scope>NUCLEOTIDE SEQUENCE [LARGE SCALE GENOMIC DNA]</scope>
    <source>
        <strain>ATCC BAA-244 / DSM 16087 / CCUG 44356 / LMG 19182 / AMMD</strain>
    </source>
</reference>
<comment type="function">
    <text evidence="1">Part of the ABC transporter complex HmuTUV involved in hemin import. Responsible for energy coupling to the transport system.</text>
</comment>
<comment type="subunit">
    <text evidence="1">The complex is composed of two ATP-binding proteins (HmuV), two transmembrane proteins (HmuU) and a solute-binding protein (HmuT).</text>
</comment>
<comment type="subcellular location">
    <subcellularLocation>
        <location evidence="1">Cell inner membrane</location>
        <topology evidence="1">Peripheral membrane protein</topology>
    </subcellularLocation>
</comment>
<comment type="similarity">
    <text evidence="1">Belongs to the ABC transporter superfamily. Heme (hemin) importer (TC 3.A.1.14.5) family.</text>
</comment>
<proteinExistence type="inferred from homology"/>
<sequence length="273" mass="29250">MLTAHHLDVARRHNVILRDLSLSIEPGRVTALLGRNGAGKSTLLKTFAGELTGSVAPNGVRVTGDITLNGEPLACIDARRLACLRAVLPQAAQPAFPFSVDEIVLLGRYPHVRRGGATSHRDRDIAWQALERADADALVGRDVTTLSGGELARVQFARVLAQLWPDDDAMEAGPRYLLLDEPTAALDLAHQHRLLDTVRAVAREWRLGVLAIVHDPNLAARHADSIALLADGTIVAHGTPRDVMTPAHIAQCYGFAVKMVETGDGAPPVMVPA</sequence>
<keyword id="KW-0067">ATP-binding</keyword>
<keyword id="KW-0997">Cell inner membrane</keyword>
<keyword id="KW-1003">Cell membrane</keyword>
<keyword id="KW-0472">Membrane</keyword>
<keyword id="KW-0547">Nucleotide-binding</keyword>
<keyword id="KW-1278">Translocase</keyword>
<keyword id="KW-0813">Transport</keyword>
<accession>Q0B697</accession>
<feature type="chain" id="PRO_0000277702" description="Hemin import ATP-binding protein HmuV">
    <location>
        <begin position="1"/>
        <end position="273"/>
    </location>
</feature>
<feature type="domain" description="ABC transporter" evidence="1">
    <location>
        <begin position="2"/>
        <end position="256"/>
    </location>
</feature>
<feature type="binding site" evidence="1">
    <location>
        <begin position="34"/>
        <end position="41"/>
    </location>
    <ligand>
        <name>ATP</name>
        <dbReference type="ChEBI" id="CHEBI:30616"/>
    </ligand>
</feature>
<name>HMUV_BURCM</name>